<dbReference type="EMBL" id="CP001657">
    <property type="protein sequence ID" value="ACT14847.1"/>
    <property type="molecule type" value="Genomic_DNA"/>
</dbReference>
<dbReference type="RefSeq" id="WP_015841932.1">
    <property type="nucleotide sequence ID" value="NC_012917.1"/>
</dbReference>
<dbReference type="SMR" id="C6DG84"/>
<dbReference type="STRING" id="561230.PC1_3832"/>
<dbReference type="KEGG" id="pct:PC1_3832"/>
<dbReference type="eggNOG" id="COG2923">
    <property type="taxonomic scope" value="Bacteria"/>
</dbReference>
<dbReference type="HOGENOM" id="CLU_155943_1_0_6"/>
<dbReference type="OrthoDB" id="9789418at2"/>
<dbReference type="Proteomes" id="UP000002736">
    <property type="component" value="Chromosome"/>
</dbReference>
<dbReference type="GO" id="GO:0005737">
    <property type="term" value="C:cytoplasm"/>
    <property type="evidence" value="ECO:0007669"/>
    <property type="project" value="UniProtKB-SubCell"/>
</dbReference>
<dbReference type="GO" id="GO:0008033">
    <property type="term" value="P:tRNA processing"/>
    <property type="evidence" value="ECO:0007669"/>
    <property type="project" value="UniProtKB-UniRule"/>
</dbReference>
<dbReference type="Gene3D" id="3.40.1260.10">
    <property type="entry name" value="DsrEFH-like"/>
    <property type="match status" value="1"/>
</dbReference>
<dbReference type="HAMAP" id="MF_00389">
    <property type="entry name" value="Thiourid_synth_C"/>
    <property type="match status" value="1"/>
</dbReference>
<dbReference type="InterPro" id="IPR027396">
    <property type="entry name" value="DsrEFH-like"/>
</dbReference>
<dbReference type="InterPro" id="IPR003787">
    <property type="entry name" value="Sulphur_relay_DsrE/F-like"/>
</dbReference>
<dbReference type="InterPro" id="IPR037450">
    <property type="entry name" value="Sulphur_relay_TusC"/>
</dbReference>
<dbReference type="InterPro" id="IPR017462">
    <property type="entry name" value="Sulphur_relay_TusC/DsrF"/>
</dbReference>
<dbReference type="NCBIfam" id="NF001238">
    <property type="entry name" value="PRK00211.1"/>
    <property type="match status" value="1"/>
</dbReference>
<dbReference type="NCBIfam" id="TIGR03010">
    <property type="entry name" value="sulf_tusC_dsrF"/>
    <property type="match status" value="1"/>
</dbReference>
<dbReference type="PANTHER" id="PTHR38780">
    <property type="entry name" value="PROTEIN TUSC"/>
    <property type="match status" value="1"/>
</dbReference>
<dbReference type="PANTHER" id="PTHR38780:SF1">
    <property type="entry name" value="PROTEIN TUSC"/>
    <property type="match status" value="1"/>
</dbReference>
<dbReference type="Pfam" id="PF02635">
    <property type="entry name" value="DsrE"/>
    <property type="match status" value="1"/>
</dbReference>
<dbReference type="SUPFAM" id="SSF75169">
    <property type="entry name" value="DsrEFH-like"/>
    <property type="match status" value="1"/>
</dbReference>
<keyword id="KW-0963">Cytoplasm</keyword>
<keyword id="KW-0819">tRNA processing</keyword>
<name>TUSC_PECCP</name>
<sequence length="119" mass="13243">MKRVAFVFTHAPHGNASGREGLDALLAVSALTEEIGVFFVGDGVLQLLPQQQPDQILMRNYIATFGVLPLYDIDCCYLCETSVRQRGLSIDTNWVLDVELLAPEAWRSKLASYHSILSF</sequence>
<proteinExistence type="inferred from homology"/>
<gene>
    <name evidence="1" type="primary">tusC</name>
    <name type="ordered locus">PC1_3832</name>
</gene>
<evidence type="ECO:0000255" key="1">
    <source>
        <dbReference type="HAMAP-Rule" id="MF_00389"/>
    </source>
</evidence>
<accession>C6DG84</accession>
<reference key="1">
    <citation type="submission" date="2009-07" db="EMBL/GenBank/DDBJ databases">
        <title>Complete sequence of Pectobacterium carotovorum subsp. carotovorum PC1.</title>
        <authorList>
            <consortium name="US DOE Joint Genome Institute"/>
            <person name="Lucas S."/>
            <person name="Copeland A."/>
            <person name="Lapidus A."/>
            <person name="Glavina del Rio T."/>
            <person name="Tice H."/>
            <person name="Bruce D."/>
            <person name="Goodwin L."/>
            <person name="Pitluck S."/>
            <person name="Munk A.C."/>
            <person name="Brettin T."/>
            <person name="Detter J.C."/>
            <person name="Han C."/>
            <person name="Tapia R."/>
            <person name="Larimer F."/>
            <person name="Land M."/>
            <person name="Hauser L."/>
            <person name="Kyrpides N."/>
            <person name="Mikhailova N."/>
            <person name="Balakrishnan V."/>
            <person name="Glasner J."/>
            <person name="Perna N.T."/>
        </authorList>
    </citation>
    <scope>NUCLEOTIDE SEQUENCE [LARGE SCALE GENOMIC DNA]</scope>
    <source>
        <strain>PC1</strain>
    </source>
</reference>
<protein>
    <recommendedName>
        <fullName evidence="1">Protein TusC</fullName>
    </recommendedName>
    <alternativeName>
        <fullName evidence="1">tRNA 2-thiouridine synthesizing protein C</fullName>
    </alternativeName>
</protein>
<organism>
    <name type="scientific">Pectobacterium carotovorum subsp. carotovorum (strain PC1)</name>
    <dbReference type="NCBI Taxonomy" id="561230"/>
    <lineage>
        <taxon>Bacteria</taxon>
        <taxon>Pseudomonadati</taxon>
        <taxon>Pseudomonadota</taxon>
        <taxon>Gammaproteobacteria</taxon>
        <taxon>Enterobacterales</taxon>
        <taxon>Pectobacteriaceae</taxon>
        <taxon>Pectobacterium</taxon>
    </lineage>
</organism>
<feature type="chain" id="PRO_1000205813" description="Protein TusC">
    <location>
        <begin position="1"/>
        <end position="119"/>
    </location>
</feature>
<comment type="function">
    <text evidence="1">Part of a sulfur-relay system required for 2-thiolation of 5-methylaminomethyl-2-thiouridine (mnm(5)s(2)U) at tRNA wobble positions.</text>
</comment>
<comment type="subunit">
    <text evidence="1">Heterohexamer, formed by a dimer of trimers. The hexameric TusBCD complex contains 2 copies each of TusB, TusC and TusD. The TusBCD complex interacts with TusE.</text>
</comment>
<comment type="subcellular location">
    <subcellularLocation>
        <location evidence="1">Cytoplasm</location>
    </subcellularLocation>
</comment>
<comment type="similarity">
    <text evidence="1">Belongs to the DsrF/TusC family.</text>
</comment>